<protein>
    <recommendedName>
        <fullName>Hemicentin-2</fullName>
    </recommendedName>
</protein>
<name>HMCN2_MOUSE</name>
<evidence type="ECO:0000250" key="1"/>
<evidence type="ECO:0000255" key="2"/>
<evidence type="ECO:0000255" key="3">
    <source>
        <dbReference type="PROSITE-ProRule" id="PRU00076"/>
    </source>
</evidence>
<evidence type="ECO:0000255" key="4">
    <source>
        <dbReference type="PROSITE-ProRule" id="PRU00348"/>
    </source>
</evidence>
<evidence type="ECO:0000256" key="5">
    <source>
        <dbReference type="SAM" id="MobiDB-lite"/>
    </source>
</evidence>
<evidence type="ECO:0000269" key="6">
    <source>
    </source>
</evidence>
<evidence type="ECO:0000269" key="7">
    <source>
    </source>
</evidence>
<evidence type="ECO:0000269" key="8">
    <source>
    </source>
</evidence>
<evidence type="ECO:0000269" key="9">
    <source>
    </source>
</evidence>
<evidence type="ECO:0000303" key="10">
    <source>
    </source>
</evidence>
<evidence type="ECO:0000305" key="11"/>
<evidence type="ECO:0007744" key="12">
    <source>
    </source>
</evidence>
<feature type="signal peptide" evidence="2">
    <location>
        <begin position="1"/>
        <end position="19"/>
    </location>
</feature>
<feature type="chain" id="PRO_0000395109" description="Hemicentin-2">
    <location>
        <begin position="20"/>
        <end position="5100"/>
    </location>
</feature>
<feature type="domain" description="VWFA">
    <location>
        <begin position="37"/>
        <end position="211"/>
    </location>
</feature>
<feature type="domain" description="Ig-like C2-type 1">
    <location>
        <begin position="426"/>
        <end position="515"/>
    </location>
</feature>
<feature type="domain" description="Ig-like C2-type 2">
    <location>
        <begin position="517"/>
        <end position="601"/>
    </location>
</feature>
<feature type="domain" description="Ig-like C2-type 3">
    <location>
        <begin position="609"/>
        <end position="692"/>
    </location>
</feature>
<feature type="domain" description="Ig-like C2-type 4">
    <location>
        <begin position="699"/>
        <end position="782"/>
    </location>
</feature>
<feature type="domain" description="Ig-like C2-type 5">
    <location>
        <begin position="787"/>
        <end position="877"/>
    </location>
</feature>
<feature type="domain" description="Ig-like C2-type 6">
    <location>
        <begin position="882"/>
        <end position="968"/>
    </location>
</feature>
<feature type="domain" description="Ig-like C2-type 7">
    <location>
        <begin position="973"/>
        <end position="1058"/>
    </location>
</feature>
<feature type="domain" description="Ig-like C2-type 8">
    <location>
        <begin position="1063"/>
        <end position="1156"/>
    </location>
</feature>
<feature type="domain" description="Ig-like C2-type 9">
    <location>
        <begin position="1161"/>
        <end position="1239"/>
    </location>
</feature>
<feature type="domain" description="Ig-like C2-type 10">
    <location>
        <begin position="1246"/>
        <end position="1335"/>
    </location>
</feature>
<feature type="domain" description="Ig-like C2-type 11">
    <location>
        <begin position="1340"/>
        <end position="1437"/>
    </location>
</feature>
<feature type="domain" description="Ig-like C2-type 12">
    <location>
        <begin position="1442"/>
        <end position="1531"/>
    </location>
</feature>
<feature type="domain" description="Ig-like C2-type 13">
    <location>
        <begin position="1536"/>
        <end position="1624"/>
    </location>
</feature>
<feature type="domain" description="Ig-like C2-type 14">
    <location>
        <begin position="1629"/>
        <end position="1717"/>
    </location>
</feature>
<feature type="domain" description="Ig-like C2-type 15">
    <location>
        <begin position="1722"/>
        <end position="1810"/>
    </location>
</feature>
<feature type="domain" description="Ig-like C2-type 16">
    <location>
        <begin position="1825"/>
        <end position="1913"/>
    </location>
</feature>
<feature type="domain" description="Ig-like C2-type 17">
    <location>
        <begin position="1920"/>
        <end position="2008"/>
    </location>
</feature>
<feature type="domain" description="Ig-like C2-type 18">
    <location>
        <begin position="2011"/>
        <end position="2100"/>
    </location>
</feature>
<feature type="domain" description="Ig-like C2-type 19">
    <location>
        <begin position="2105"/>
        <end position="2189"/>
    </location>
</feature>
<feature type="domain" description="Ig-like C2-type 20">
    <location>
        <begin position="2196"/>
        <end position="2285"/>
    </location>
</feature>
<feature type="domain" description="Ig-like C2-type 21">
    <location>
        <begin position="2290"/>
        <end position="2379"/>
    </location>
</feature>
<feature type="domain" description="Ig-like C2-type 22">
    <location>
        <begin position="2384"/>
        <end position="2473"/>
    </location>
</feature>
<feature type="domain" description="Ig-like C2-type 23">
    <location>
        <begin position="2478"/>
        <end position="2566"/>
    </location>
</feature>
<feature type="domain" description="Ig-like C2-type 24">
    <location>
        <begin position="2571"/>
        <end position="2662"/>
    </location>
</feature>
<feature type="domain" description="Ig-like C2-type 25">
    <location>
        <begin position="2667"/>
        <end position="2758"/>
    </location>
</feature>
<feature type="domain" description="Ig-like C2-type 26">
    <location>
        <begin position="2781"/>
        <end position="2871"/>
    </location>
</feature>
<feature type="domain" description="Ig-like C2-type 27">
    <location>
        <begin position="2875"/>
        <end position="2964"/>
    </location>
</feature>
<feature type="domain" description="Ig-like C2-type 28">
    <location>
        <begin position="2971"/>
        <end position="3058"/>
    </location>
</feature>
<feature type="domain" description="Ig-like C2-type 29">
    <location>
        <begin position="3063"/>
        <end position="3153"/>
    </location>
</feature>
<feature type="domain" description="Ig-like C2-type 30">
    <location>
        <begin position="3157"/>
        <end position="3245"/>
    </location>
</feature>
<feature type="domain" description="Ig-like C2-type 31">
    <location>
        <begin position="3250"/>
        <end position="3340"/>
    </location>
</feature>
<feature type="domain" description="Ig-like C2-type 32">
    <location>
        <begin position="3345"/>
        <end position="3432"/>
    </location>
</feature>
<feature type="domain" description="Ig-like C2-type 33">
    <location>
        <begin position="3438"/>
        <end position="3523"/>
    </location>
</feature>
<feature type="domain" description="Ig-like C2-type 34">
    <location>
        <begin position="3528"/>
        <end position="3609"/>
    </location>
</feature>
<feature type="domain" description="Ig-like C2-type 35">
    <location>
        <begin position="3614"/>
        <end position="3702"/>
    </location>
</feature>
<feature type="domain" description="Ig-like C2-type 36">
    <location>
        <begin position="3707"/>
        <end position="3793"/>
    </location>
</feature>
<feature type="domain" description="Ig-like C2-type 37">
    <location>
        <begin position="3798"/>
        <end position="3886"/>
    </location>
</feature>
<feature type="domain" description="Ig-like C2-type 38">
    <location>
        <begin position="3891"/>
        <end position="3977"/>
    </location>
</feature>
<feature type="domain" description="Ig-like C2-type 39">
    <location>
        <begin position="3982"/>
        <end position="4067"/>
    </location>
</feature>
<feature type="domain" description="Ig-like C2-type 40">
    <location>
        <begin position="4071"/>
        <end position="4158"/>
    </location>
</feature>
<feature type="domain" description="Ig-like C2-type 41">
    <location>
        <begin position="4163"/>
        <end position="4244"/>
    </location>
</feature>
<feature type="domain" description="Ig-like C2-type 42">
    <location>
        <begin position="4252"/>
        <end position="4336"/>
    </location>
</feature>
<feature type="domain" description="Ig-like C2-type 43">
    <location>
        <begin position="4343"/>
        <end position="4428"/>
    </location>
</feature>
<feature type="domain" description="Nidogen G2 beta-barrel" evidence="4">
    <location>
        <begin position="4432"/>
        <end position="4654"/>
    </location>
</feature>
<feature type="domain" description="EGF-like 1; calcium-binding" evidence="3">
    <location>
        <begin position="4668"/>
        <end position="4708"/>
    </location>
</feature>
<feature type="domain" description="EGF-like 2; calcium-binding" evidence="3">
    <location>
        <begin position="4709"/>
        <end position="4753"/>
    </location>
</feature>
<feature type="domain" description="EGF-like 3; calcium-binding" evidence="3">
    <location>
        <begin position="4754"/>
        <end position="4789"/>
    </location>
</feature>
<feature type="domain" description="EGF-like 4; calcium-binding" evidence="3">
    <location>
        <begin position="4797"/>
        <end position="4837"/>
    </location>
</feature>
<feature type="domain" description="EGF-like 5; calcium-binding" evidence="3">
    <location>
        <begin position="4904"/>
        <end position="4943"/>
    </location>
</feature>
<feature type="region of interest" description="Disordered" evidence="5">
    <location>
        <begin position="1265"/>
        <end position="1293"/>
    </location>
</feature>
<feature type="modified residue" description="Omega-N-methylarginine" evidence="12">
    <location>
        <position position="909"/>
    </location>
</feature>
<feature type="modified residue" description="Omega-N-methylarginine" evidence="12">
    <location>
        <position position="914"/>
    </location>
</feature>
<feature type="modified residue" description="Omega-N-methylarginine" evidence="12">
    <location>
        <position position="915"/>
    </location>
</feature>
<feature type="glycosylation site" description="N-linked (GlcNAc...) asparagine" evidence="2">
    <location>
        <position position="330"/>
    </location>
</feature>
<feature type="glycosylation site" description="N-linked (GlcNAc...) asparagine" evidence="2">
    <location>
        <position position="347"/>
    </location>
</feature>
<feature type="glycosylation site" description="N-linked (GlcNAc...) asparagine" evidence="2">
    <location>
        <position position="380"/>
    </location>
</feature>
<feature type="glycosylation site" description="N-linked (GlcNAc...) asparagine" evidence="2">
    <location>
        <position position="479"/>
    </location>
</feature>
<feature type="glycosylation site" description="N-linked (GlcNAc...) asparagine" evidence="2">
    <location>
        <position position="526"/>
    </location>
</feature>
<feature type="glycosylation site" description="N-linked (GlcNAc...) asparagine" evidence="2">
    <location>
        <position position="548"/>
    </location>
</feature>
<feature type="glycosylation site" description="N-linked (GlcNAc...) asparagine" evidence="2">
    <location>
        <position position="675"/>
    </location>
</feature>
<feature type="glycosylation site" description="N-linked (GlcNAc...) asparagine" evidence="2">
    <location>
        <position position="1024"/>
    </location>
</feature>
<feature type="glycosylation site" description="N-linked (GlcNAc...) asparagine" evidence="2">
    <location>
        <position position="1068"/>
    </location>
</feature>
<feature type="glycosylation site" description="N-linked (GlcNAc...) asparagine" evidence="2">
    <location>
        <position position="1264"/>
    </location>
</feature>
<feature type="glycosylation site" description="N-linked (GlcNAc...) asparagine" evidence="2">
    <location>
        <position position="1350"/>
    </location>
</feature>
<feature type="glycosylation site" description="N-linked (GlcNAc...) asparagine" evidence="2">
    <location>
        <position position="1542"/>
    </location>
</feature>
<feature type="glycosylation site" description="N-linked (GlcNAc...) asparagine" evidence="2">
    <location>
        <position position="1676"/>
    </location>
</feature>
<feature type="glycosylation site" description="N-linked (GlcNAc...) asparagine" evidence="2">
    <location>
        <position position="1787"/>
    </location>
</feature>
<feature type="glycosylation site" description="N-linked (GlcNAc...) asparagine" evidence="2">
    <location>
        <position position="1934"/>
    </location>
</feature>
<feature type="glycosylation site" description="N-linked (GlcNAc...) asparagine" evidence="2">
    <location>
        <position position="2034"/>
    </location>
</feature>
<feature type="glycosylation site" description="N-linked (GlcNAc...) asparagine" evidence="2">
    <location>
        <position position="2113"/>
    </location>
</feature>
<feature type="glycosylation site" description="N-linked (GlcNAc...) asparagine" evidence="2">
    <location>
        <position position="2119"/>
    </location>
</feature>
<feature type="glycosylation site" description="N-linked (GlcNAc...) asparagine" evidence="2">
    <location>
        <position position="2309"/>
    </location>
</feature>
<feature type="glycosylation site" description="N-linked (GlcNAc...) asparagine" evidence="2">
    <location>
        <position position="2315"/>
    </location>
</feature>
<feature type="glycosylation site" description="N-linked (GlcNAc...) asparagine" evidence="2">
    <location>
        <position position="2345"/>
    </location>
</feature>
<feature type="glycosylation site" description="N-linked (GlcNAc...) asparagine" evidence="2">
    <location>
        <position position="2395"/>
    </location>
</feature>
<feature type="glycosylation site" description="N-linked (GlcNAc...) asparagine" evidence="2">
    <location>
        <position position="2469"/>
    </location>
</feature>
<feature type="glycosylation site" description="N-linked (GlcNAc...) asparagine" evidence="2">
    <location>
        <position position="2502"/>
    </location>
</feature>
<feature type="glycosylation site" description="N-linked (GlcNAc...) asparagine" evidence="2">
    <location>
        <position position="2541"/>
    </location>
</feature>
<feature type="glycosylation site" description="N-linked (GlcNAc...) asparagine" evidence="2">
    <location>
        <position position="2606"/>
    </location>
</feature>
<feature type="glycosylation site" description="N-linked (GlcNAc...) asparagine" evidence="2">
    <location>
        <position position="2688"/>
    </location>
</feature>
<feature type="glycosylation site" description="N-linked (GlcNAc...) asparagine" evidence="2">
    <location>
        <position position="2892"/>
    </location>
</feature>
<feature type="glycosylation site" description="N-linked (GlcNAc...) asparagine" evidence="2">
    <location>
        <position position="2986"/>
    </location>
</feature>
<feature type="glycosylation site" description="N-linked (GlcNAc...) asparagine" evidence="2">
    <location>
        <position position="3430"/>
    </location>
</feature>
<feature type="glycosylation site" description="N-linked (GlcNAc...) asparagine" evidence="2">
    <location>
        <position position="3560"/>
    </location>
</feature>
<feature type="glycosylation site" description="N-linked (GlcNAc...) asparagine" evidence="2">
    <location>
        <position position="3575"/>
    </location>
</feature>
<feature type="glycosylation site" description="N-linked (GlcNAc...) asparagine" evidence="2">
    <location>
        <position position="3717"/>
    </location>
</feature>
<feature type="glycosylation site" description="N-linked (GlcNAc...) asparagine" evidence="2">
    <location>
        <position position="3721"/>
    </location>
</feature>
<feature type="glycosylation site" description="N-linked (GlcNAc...) asparagine" evidence="2">
    <location>
        <position position="3806"/>
    </location>
</feature>
<feature type="glycosylation site" description="N-linked (GlcNAc...) asparagine" evidence="2">
    <location>
        <position position="4304"/>
    </location>
</feature>
<feature type="glycosylation site" description="N-linked (GlcNAc...) asparagine" evidence="2">
    <location>
        <position position="4455"/>
    </location>
</feature>
<feature type="glycosylation site" description="N-linked (GlcNAc...) asparagine" evidence="2">
    <location>
        <position position="4601"/>
    </location>
</feature>
<feature type="glycosylation site" description="N-linked (GlcNAc...) asparagine" evidence="2">
    <location>
        <position position="4845"/>
    </location>
</feature>
<feature type="glycosylation site" description="N-linked (GlcNAc...) asparagine" evidence="2">
    <location>
        <position position="5035"/>
    </location>
</feature>
<feature type="disulfide bond" evidence="1">
    <location>
        <begin position="449"/>
        <end position="497"/>
    </location>
</feature>
<feature type="disulfide bond" evidence="1">
    <location>
        <begin position="539"/>
        <end position="588"/>
    </location>
</feature>
<feature type="disulfide bond" evidence="1">
    <location>
        <begin position="630"/>
        <end position="678"/>
    </location>
</feature>
<feature type="disulfide bond" evidence="1">
    <location>
        <begin position="720"/>
        <end position="766"/>
    </location>
</feature>
<feature type="disulfide bond" evidence="1">
    <location>
        <begin position="808"/>
        <end position="859"/>
    </location>
</feature>
<feature type="disulfide bond" evidence="1">
    <location>
        <begin position="903"/>
        <end position="952"/>
    </location>
</feature>
<feature type="disulfide bond" evidence="1">
    <location>
        <begin position="994"/>
        <end position="1042"/>
    </location>
</feature>
<feature type="disulfide bond" evidence="1">
    <location>
        <begin position="1091"/>
        <end position="1140"/>
    </location>
</feature>
<feature type="disulfide bond" evidence="1">
    <location>
        <begin position="1182"/>
        <end position="1225"/>
    </location>
</feature>
<feature type="disulfide bond" evidence="1">
    <location>
        <begin position="1269"/>
        <end position="1319"/>
    </location>
</feature>
<feature type="disulfide bond" evidence="1">
    <location>
        <begin position="1363"/>
        <end position="1421"/>
    </location>
</feature>
<feature type="disulfide bond" evidence="1">
    <location>
        <begin position="1465"/>
        <end position="1515"/>
    </location>
</feature>
<feature type="disulfide bond" evidence="1">
    <location>
        <begin position="1559"/>
        <end position="1608"/>
    </location>
</feature>
<feature type="disulfide bond" evidence="1">
    <location>
        <begin position="1653"/>
        <end position="1701"/>
    </location>
</feature>
<feature type="disulfide bond" evidence="1">
    <location>
        <begin position="1745"/>
        <end position="1794"/>
    </location>
</feature>
<feature type="disulfide bond" evidence="1">
    <location>
        <begin position="1846"/>
        <end position="1899"/>
    </location>
</feature>
<feature type="disulfide bond" evidence="1">
    <location>
        <begin position="1941"/>
        <end position="1990"/>
    </location>
</feature>
<feature type="disulfide bond" evidence="1">
    <location>
        <begin position="2033"/>
        <end position="2084"/>
    </location>
</feature>
<feature type="disulfide bond" evidence="1">
    <location>
        <begin position="2126"/>
        <end position="2175"/>
    </location>
</feature>
<feature type="disulfide bond" evidence="1">
    <location>
        <begin position="2218"/>
        <end position="2269"/>
    </location>
</feature>
<feature type="disulfide bond" evidence="1">
    <location>
        <begin position="2314"/>
        <end position="2363"/>
    </location>
</feature>
<feature type="disulfide bond" evidence="1">
    <location>
        <begin position="2408"/>
        <end position="2457"/>
    </location>
</feature>
<feature type="disulfide bond" evidence="1">
    <location>
        <begin position="2501"/>
        <end position="2550"/>
    </location>
</feature>
<feature type="disulfide bond" evidence="1">
    <location>
        <begin position="2597"/>
        <end position="2646"/>
    </location>
</feature>
<feature type="disulfide bond" evidence="1">
    <location>
        <begin position="2695"/>
        <end position="2744"/>
    </location>
</feature>
<feature type="disulfide bond" evidence="1">
    <location>
        <begin position="2806"/>
        <end position="2855"/>
    </location>
</feature>
<feature type="disulfide bond" evidence="1">
    <location>
        <begin position="2901"/>
        <end position="2950"/>
    </location>
</feature>
<feature type="disulfide bond" evidence="1">
    <location>
        <begin position="2993"/>
        <end position="3042"/>
    </location>
</feature>
<feature type="disulfide bond" evidence="1">
    <location>
        <begin position="3088"/>
        <end position="3137"/>
    </location>
</feature>
<feature type="disulfide bond" evidence="1">
    <location>
        <begin position="3180"/>
        <end position="3229"/>
    </location>
</feature>
<feature type="disulfide bond" evidence="1">
    <location>
        <begin position="3273"/>
        <end position="3324"/>
    </location>
</feature>
<feature type="disulfide bond" evidence="1">
    <location>
        <begin position="3369"/>
        <end position="3418"/>
    </location>
</feature>
<feature type="disulfide bond" evidence="1">
    <location>
        <begin position="3462"/>
        <end position="3507"/>
    </location>
</feature>
<feature type="disulfide bond" evidence="1">
    <location>
        <begin position="3551"/>
        <end position="3593"/>
    </location>
</feature>
<feature type="disulfide bond" evidence="1">
    <location>
        <begin position="3637"/>
        <end position="3686"/>
    </location>
</feature>
<feature type="disulfide bond" evidence="1">
    <location>
        <begin position="3728"/>
        <end position="3777"/>
    </location>
</feature>
<feature type="disulfide bond" evidence="1">
    <location>
        <begin position="3819"/>
        <end position="3870"/>
    </location>
</feature>
<feature type="disulfide bond" evidence="1">
    <location>
        <begin position="3912"/>
        <end position="3961"/>
    </location>
</feature>
<feature type="disulfide bond" evidence="1">
    <location>
        <begin position="4003"/>
        <end position="4051"/>
    </location>
</feature>
<feature type="disulfide bond" evidence="1">
    <location>
        <begin position="4093"/>
        <end position="4142"/>
    </location>
</feature>
<feature type="disulfide bond" evidence="1">
    <location>
        <begin position="4184"/>
        <end position="4231"/>
    </location>
</feature>
<feature type="disulfide bond" evidence="1">
    <location>
        <begin position="4274"/>
        <end position="4322"/>
    </location>
</feature>
<feature type="disulfide bond" evidence="1">
    <location>
        <begin position="4364"/>
        <end position="4412"/>
    </location>
</feature>
<feature type="disulfide bond" evidence="1">
    <location>
        <begin position="4672"/>
        <end position="4683"/>
    </location>
</feature>
<feature type="disulfide bond" evidence="1">
    <location>
        <begin position="4679"/>
        <end position="4692"/>
    </location>
</feature>
<feature type="disulfide bond" evidence="1">
    <location>
        <begin position="4694"/>
        <end position="4707"/>
    </location>
</feature>
<feature type="disulfide bond" evidence="1">
    <location>
        <begin position="4713"/>
        <end position="4726"/>
    </location>
</feature>
<feature type="disulfide bond" evidence="1">
    <location>
        <begin position="4720"/>
        <end position="4735"/>
    </location>
</feature>
<feature type="disulfide bond" evidence="1">
    <location>
        <begin position="4739"/>
        <end position="4752"/>
    </location>
</feature>
<feature type="disulfide bond" evidence="1">
    <location>
        <begin position="4758"/>
        <end position="4771"/>
    </location>
</feature>
<feature type="disulfide bond" evidence="1">
    <location>
        <begin position="4765"/>
        <end position="4780"/>
    </location>
</feature>
<feature type="disulfide bond" evidence="1">
    <location>
        <begin position="4801"/>
        <end position="4812"/>
    </location>
</feature>
<feature type="disulfide bond" evidence="1">
    <location>
        <begin position="4808"/>
        <end position="4821"/>
    </location>
</feature>
<feature type="disulfide bond" evidence="1">
    <location>
        <begin position="4823"/>
        <end position="4836"/>
    </location>
</feature>
<feature type="disulfide bond" evidence="1">
    <location>
        <begin position="4908"/>
        <end position="4918"/>
    </location>
</feature>
<feature type="disulfide bond" evidence="1">
    <location>
        <begin position="4914"/>
        <end position="4927"/>
    </location>
</feature>
<feature type="disulfide bond" evidence="1">
    <location>
        <begin position="4929"/>
        <end position="4942"/>
    </location>
</feature>
<feature type="splice variant" id="VSP_039372" description="In isoform 2." evidence="10">
    <location>
        <begin position="1"/>
        <end position="4439"/>
    </location>
</feature>
<feature type="sequence conflict" description="In Ref. 1; BAC38997." evidence="11" ref="1">
    <original>A</original>
    <variation>V</variation>
    <location>
        <position position="5026"/>
    </location>
</feature>
<feature type="sequence conflict" description="In Ref. 1; BAC38997." evidence="11" ref="1">
    <original>L</original>
    <variation>V</variation>
    <location>
        <position position="5068"/>
    </location>
</feature>
<organism>
    <name type="scientific">Mus musculus</name>
    <name type="common">Mouse</name>
    <dbReference type="NCBI Taxonomy" id="10090"/>
    <lineage>
        <taxon>Eukaryota</taxon>
        <taxon>Metazoa</taxon>
        <taxon>Chordata</taxon>
        <taxon>Craniata</taxon>
        <taxon>Vertebrata</taxon>
        <taxon>Euteleostomi</taxon>
        <taxon>Mammalia</taxon>
        <taxon>Eutheria</taxon>
        <taxon>Euarchontoglires</taxon>
        <taxon>Glires</taxon>
        <taxon>Rodentia</taxon>
        <taxon>Myomorpha</taxon>
        <taxon>Muroidea</taxon>
        <taxon>Muridae</taxon>
        <taxon>Murinae</taxon>
        <taxon>Mus</taxon>
        <taxon>Mus</taxon>
    </lineage>
</organism>
<accession>A2AJ76</accession>
<accession>Q8BNH3</accession>
<sequence length="5100" mass="547198">MTPGAQLLPLLVAISTAVAAVVTSDAPTKTLSPATGDATLAFVFDVTGSMWDDLMQVIDGASRILERSLSSRSRVIANYALVPFHDPDIGPVTLTADPVVFQRELRELYVQGGGDCPEMSVGAIKAAVEVANPGSFIYVFSDARAKDYHKKKELLQLLQLKQSQVVFVLTGDCGDRTHPGYLVFEEIASTSSGQVFQLDKQQVSEVLKWVESAIQASKVHLLSADHEEEGEHTWRIPFDPSLKEVTIALSGPGPEIEVRDPLGRVLQTDEGLNVLLNIPDSAKVVAFKPEHPGLWAIKVYSSGRHSVRISGISNINFRAGFSMQPSLDLNHTIEWPLQGVPISLVINSTGLQAPGHLESVELSHSSGRSLLTLPTQLLSNGSTHQLWAGPPFHVPKERFYLKVKGKDHEGNPLLRVSGVSYSAVAPGVPLVSMAPKIHGYLQQPLLVSCSVYSTLPFQLQLQRDGERLGEERYFQESGNSSWEIPRASKAEEGTYQCIAVSRAGSGRASAQIVITDPPPQLVPGPNVTVSPGETAILSCQVLGETPYNLTWVRDWRALPATTGRISQLSDLSLEVRSIIPTDGGQYQCVASNPNGVTRATTWLLVREAPQVSINARSQRFSQGVEVRVSCSASGYPTPHISWSREGLALPEDSRIHVDAQGTLIIQGLAPEDAGNYSCQATNEVGTDEETVTLYYTDPPSVSAVNAVVLTAVGEEAVLLCAASGVPPPRVIWYRGGLEVILAPGDSRSGTLRIPEAQERDAGLYTCKAVNELGDASAEIQLVVGNAPRLTDPPQDVTVELGKSVFLTCRATGRPPPIVTWRRGDGQALEPGRGSRTGQRDSGVLVFERVSLEDQAPYVCEARNVFGKAQAEARLVVTGHAPPQIANSASVVRVLEGQPVSLTCVILAGRPLPERRWLKAGSPLPPGNRHAVRADGSLHLDRALQEDAGRYSCVATNVAGSQHRDVELVVQVPPRIHPTSTHHVTNEGVPASLPCIASGVPTPKITWTKETNALTTSGHYSVSRNGTLVIVQPSPQDAGAYVCTATNSVGFSSQEMWLSVNTKPMIKMNGSQAVDVPLRVTVKAGEEVTLDCEAQGSPTPLLTWTKDANPLLPVTNRYELLPSGSLRLAQAQVGDNGLYGCTASNPAGATSRRYVLRVQVPPQVQPGPRVLKVLAGEALDLNCVAEGNPQPQLNWFKDGMALMGEGAQGSVHFAAVKTSDAGLYRCEASNSAGTDTWKLELLVLEPPHWGTDETKSLLERVAGENASLPCPAQGTPKPRITWRRGPSSEPLNGRPDVAVLDEGSLFLSSVSLADSGEYECQATNEVGSASRRAKLVVYVPPSIREEGHITNVSGLAGQPLTLECDINGFPAPEVAWLKDGQLVGDSGGGWDGEEASGHRLLDGSRSLHFPRIQESHSGLYSCQAENQAGSAQRDFNLAVFIPPSLLGAGAAQEVLGLAGADVTLECQTSGVPTPQVEWTKDGQPILPGDPHILLQEDGQVLRIISSHLGDEGQYQCVAFSPAGQQAKDFQLSIHSPPTIWGSNETGEVTVLEGHTAQLLCEARGMPSPAITWYKDGTLLAPSSEVVYSKGGRQLQLVKAQPSDAGLYTCQASNPAGITKKSTSLEVYVPPTIEGADGGPYLVQAVAGRPVALECVARGHPPPTISWQHEGLPVVDSNGTWLEAGGALQLENPGEASGGLYSCVASSPAGEAVLQYSVEMQVPPQLLVAEGMGQVTATVGQSLDLPCQASGSPVPTIQWLQNGRPAEELAGVQLASQGTILHISHVELNHSGLFACQATNEAGTAGAEVEVSVHGKQVSVNLGASFSAHHWWGEPHSPFPATCNPPVCRHWSAYPKPSLVERWRGRGNLRGQPSGTVREPGLTLLSQIEKADLRDEGVYTCSATNLAGESKKDVTLKVLVPPNIEPGPVNKVVLENASVTLECLASGVPPPDVSWFKGRQPISTQRRVIVSADGRVLHIERVQLSDAGSYRCVATNVAGSAGLKYGLRVNVPPRITLPPNLPGPVLLGTPFRLTCNATGTPRPTLIWLKDGNPVSPEGIPGLKVFPGGQVLTVASARASDSGSYSCVAVSAVGEDRRDVILQVHMPPSILGEELNMSVVVNESVTLECQSHAVPPPVLRWQKDGRPLEPHPGIRLSADKALLEVDRAAVWDAGHYTCEAINQAGRSEKHFNLHVWVPPAFPSKEPYTLTVTEGQTARLSCDCQGIPFPKISWRKDGQPLPGEGDSLEQVLAVGRLLYLGQAQSAQEGTYTCECSNAAGTSSQEQSLEVLVPPQVTGLWEPLTTVSVIQDGNTTLACNATGKPLPVVTWQRDGQPVSVEPGLRLQNQNHSLHVERAQASHAGGYSCVAENTAGRAERRFALSVLAPPHLTGDSDSLTNVTATLHGSFTLLCEAAGVPAPTVQWFQEGQPISPREGTYLLAGGWMLKMTQAQEQDRGLYSCLASNEAGEARRNFSVEVLVPPSIENEDLEEVIKVPEGQTAQLECNATGHPPPKVTWFKDGQSLTVEDPYEMSPDGAFLWIPQANLSNAGHYSCIASNAVGEKTKHTQLSVLVVPTILGVPEKNANEEVTVTINNPISLICEALAFPSPNITWMKDGSPFEASKNIQLLPGTHGLQILNAQKEDAGQYTCVVTNELGEATKNYHVEVLIPPSISKDDPLGEVSVKEVKTKVNSSLTLECECWATPPPSISWYKDGRPVTPSHRLSVLGEGRLLQIQPTQVSDSGRYLCVATNVAGEDDQDFNVLIQVPPMFQKMGDVDAGFEPLPHEEEAQGRVTEYREIVENNPAYLYCDTNAIPPPELTWYREGQPLSAADGVSVLQGGRILQLPLVQAEDAGRYSCKAANEVGEDWLHYELLVLTPPVIPGDTQELVEEVTVNASSAVSLECPALGNPAPAVSWFQNGLPVSPSPRLQVLEEGQVLKVATAEVADAASYMCVAENQAGSAEKLFTLKVQVPPQISDWTTSQLTATLNSSVSLPCEVYAHPNPEVTWYKDGQPLSLGQEAFLLPGTHTLRLARAQPADSGTYLCEALNAAGRDQKMVQLNVLVPPSFKQAPGGPQEAIQVRAGDKAILSCETDSLPEPAVTWFKDQQPLALGQRIQGLQGGQTLEILDSQASDKGVYSCKVSNTAGEAIRTFVLAIQVPPTFEKPERETVNQVAGRTLVLACDVSGIPAPTVTWLKDRLPVESSVVHGVVSRGGRLQLSHLQPAQAGTYTCVAENAQAEARKDFVVSVLVPPQIQDSGMAQEHNVLEKQEIRLHCEAEGQPPPDITWLKDGGLLDQHVGPHLRFYLDGSTLVLKGLRTADSGAYTCVAHNPAGEDARLHTVNVLVPPTIKQQAGDTGTLVSRTGELVTMVCPVQGSPPIHVSWLKDGLPLPLSQRTLLHSSGRTLRISQVQLADSGVFTCVAASPAGVADRNFTLLVLVPPILEPVEFQNNVMAAQGSEVVLPCEARGSPLPLVSWMKDGEPLLPQSLEQGPGLKLESVSVGDAGTYSCTAASEAGEARRHFQLTVMDPPHIEESGETSELSLTPGAHLELLCEARGIPPPNITWHKDGQALRRTENDSQAGRVLRVDNAGLYTCLAESPAGEVEKSFRVRVQAPPNVVGPRGPRSVVGLAPGQLILECSVEAEPAPEIEWHRGGVLLQADAHTHFPEQGRFLKLQALSTADGGDYSCTARNRAGSTSVAFRVEIHTAPTIQSGPNTVNVSVNRTTLLPCQTHGVPTPLVSWRKDGIPLHPGSPRLEFLPEGSLRIHPVLAQDAGHYLCLASNSAGSDRKGLDLRVFEPPAIAPGPSNLTLTAYSPASLPCEARGSPKPLVTWWKDGQKLDLRLQQGAYRLLPSNALFLTAPSPQDSAQFECVVSNEVGESRRRYQVTVHVPPTIADDQTHFTVTRMAPVILTCHSTGSPTPAVSWSKAGTQLGARGSGYRILPSGALEIERALPLHAGRYTCTARNSAGVARKHMVLTVQASPVVKPLPSVVQVVASEEVLLPCEASGIPQPMVIWQKEGLSIPEGAHMQVLPSGQLRIMHASPEDAGNYFCIAQNSVGSAMAKTRLVVQVPPVIENGLPDLSTIEGSHALLPCTAKGSPEPAITWEKDGHLVSGAEGKFTLQPSGELLVKNSEGQDAGTYICTAENAVGRARRRVHLTILTLPVLTTLPGDRSLRLGDRLWLRCVARGSPTPRIGWTINDQPVTEGVSEQDGGSTLQRAAVTREDSGTYTCWAENRVGRVQAVSFVHVKEAPVLQGEAFSYLVEPVGGSIQLHCVVRGDPAPDIHWTKDGLPLPISRLHFQLQNGSLTILRTKMDDAGRYQCLAVNEMGTVKKVVTVVLQSAPVFQVEPQDVTVRSGVDVELRCRATGEPVPTIEWLRAGRPLQAGRKLRALPDGSLWLEHVEAGDAGVYECVAHNHLGSVTAKALLAVRGEPRGSRGSMTGVINGQEFGMATLNISVLQQGSSEAPTIWSSISQVPASVGPLMRVLVVTIAPIYWALARESGEALNGYSLTGGSFQQESQMEFSTGELLTMTQVARGLDPDGLLLVDMKINGMIPESLADGDLRVQDFQEHYVQTGPGQLFAGSTQRFLHDSLPASLRCNHSIQYDETRGLQPQLVQHLRASSISSAFDPEAEALNFQLTTALQTEENEVGCPEGFEPDVQGAFCVDKDECSGGPSPCSHTCRNAPGHFSCSCPTGFSLAWDHRNCRDVDECAGNTHLCQEEQRCVNLLGSYNCLASCRPGFRVTADGSNCEDVDECLEQLDECHYNQLCENTPGGHHCGCPRGYRQQGHSLPCLDINECLQLPTPCVYQCQNLQGSYRCLCPPGQTLLRDGRTCIPLERNRQNITIVSHRSPFGPWLRSRVPRPSSSYHTWVSLRPGSGALNSVGRAWCPPGFIRQDGVCADLDECRVRSLCQHACQNTEGSYYCLCPSGYRLLPSGKNCQDINECEEDGIECGPGQMCFNTRGSFQCVDTPCPTTYRQGSSPGTCFRRCSQDCSASGPSTLQYRLLPLPLGVRAHHDVARLAAFSEAGIPANRTELTVLEPDPRSPFALRQLRAGQGAVYTRRALTRAGLYRLTVRAAAPRHQSVYILLIAVSPYPY</sequence>
<proteinExistence type="evidence at protein level"/>
<dbReference type="EMBL" id="AK083701">
    <property type="protein sequence ID" value="BAC38997.1"/>
    <property type="status" value="ALT_FRAME"/>
    <property type="molecule type" value="mRNA"/>
</dbReference>
<dbReference type="EMBL" id="AL732564">
    <property type="status" value="NOT_ANNOTATED_CDS"/>
    <property type="molecule type" value="Genomic_DNA"/>
</dbReference>
<dbReference type="EMBL" id="AL732572">
    <property type="status" value="NOT_ANNOTATED_CDS"/>
    <property type="molecule type" value="Genomic_DNA"/>
</dbReference>
<dbReference type="EMBL" id="AL928861">
    <property type="status" value="NOT_ANNOTATED_CDS"/>
    <property type="molecule type" value="Genomic_DNA"/>
</dbReference>
<dbReference type="FunCoup" id="A2AJ76">
    <property type="interactions" value="3"/>
</dbReference>
<dbReference type="STRING" id="10090.ENSMUSP00000109160"/>
<dbReference type="GlyCosmos" id="A2AJ76">
    <property type="glycosylation" value="40 sites, No reported glycans"/>
</dbReference>
<dbReference type="GlyGen" id="A2AJ76">
    <property type="glycosylation" value="44 sites, 1 O-linked glycan (1 site)"/>
</dbReference>
<dbReference type="iPTMnet" id="A2AJ76"/>
<dbReference type="PhosphoSitePlus" id="A2AJ76"/>
<dbReference type="PaxDb" id="10090-ENSMUSP00000109160"/>
<dbReference type="PeptideAtlas" id="A2AJ76"/>
<dbReference type="ProteomicsDB" id="273183">
    <molecule id="A2AJ76-1"/>
</dbReference>
<dbReference type="ProteomicsDB" id="273184">
    <molecule id="A2AJ76-2"/>
</dbReference>
<dbReference type="Antibodypedia" id="65468">
    <property type="antibodies" value="13 antibodies from 6 providers"/>
</dbReference>
<dbReference type="Ensembl" id="ENSMUST00000113532.9">
    <molecule id="A2AJ76-1"/>
    <property type="protein sequence ID" value="ENSMUSP00000109160.3"/>
    <property type="gene ID" value="ENSMUSG00000055632.19"/>
</dbReference>
<dbReference type="UCSC" id="uc008jds.3">
    <molecule id="A2AJ76-2"/>
    <property type="organism name" value="mouse"/>
</dbReference>
<dbReference type="AGR" id="MGI:2677838"/>
<dbReference type="MGI" id="MGI:2677838">
    <property type="gene designation" value="Hmcn2"/>
</dbReference>
<dbReference type="VEuPathDB" id="HostDB:ENSMUSG00000055632"/>
<dbReference type="eggNOG" id="KOG1217">
    <property type="taxonomic scope" value="Eukaryota"/>
</dbReference>
<dbReference type="eggNOG" id="KOG4475">
    <property type="taxonomic scope" value="Eukaryota"/>
</dbReference>
<dbReference type="GeneTree" id="ENSGT00940000162328"/>
<dbReference type="HOGENOM" id="CLU_000087_0_0_1"/>
<dbReference type="InParanoid" id="A2AJ76"/>
<dbReference type="OMA" id="PDIRWIK"/>
<dbReference type="OrthoDB" id="5985519at2759"/>
<dbReference type="PhylomeDB" id="A2AJ76"/>
<dbReference type="ChiTaRS" id="Hmcn2">
    <property type="organism name" value="mouse"/>
</dbReference>
<dbReference type="PRO" id="PR:A2AJ76"/>
<dbReference type="Proteomes" id="UP000000589">
    <property type="component" value="Chromosome 2"/>
</dbReference>
<dbReference type="RNAct" id="A2AJ76">
    <property type="molecule type" value="protein"/>
</dbReference>
<dbReference type="Bgee" id="ENSMUSG00000055632">
    <property type="expression patterns" value="Expressed in esophagus and 54 other cell types or tissues"/>
</dbReference>
<dbReference type="ExpressionAtlas" id="A2AJ76">
    <property type="expression patterns" value="baseline and differential"/>
</dbReference>
<dbReference type="GO" id="GO:0005604">
    <property type="term" value="C:basement membrane"/>
    <property type="evidence" value="ECO:0000314"/>
    <property type="project" value="MGI"/>
</dbReference>
<dbReference type="GO" id="GO:0005938">
    <property type="term" value="C:cell cortex"/>
    <property type="evidence" value="ECO:0000314"/>
    <property type="project" value="MGI"/>
</dbReference>
<dbReference type="GO" id="GO:0030054">
    <property type="term" value="C:cell junction"/>
    <property type="evidence" value="ECO:0000314"/>
    <property type="project" value="MGI"/>
</dbReference>
<dbReference type="GO" id="GO:0032154">
    <property type="term" value="C:cleavage furrow"/>
    <property type="evidence" value="ECO:0007669"/>
    <property type="project" value="UniProtKB-SubCell"/>
</dbReference>
<dbReference type="GO" id="GO:0062023">
    <property type="term" value="C:collagen-containing extracellular matrix"/>
    <property type="evidence" value="ECO:0007005"/>
    <property type="project" value="BHF-UCL"/>
</dbReference>
<dbReference type="GO" id="GO:0005576">
    <property type="term" value="C:extracellular region"/>
    <property type="evidence" value="ECO:0000314"/>
    <property type="project" value="MGI"/>
</dbReference>
<dbReference type="GO" id="GO:0005509">
    <property type="term" value="F:calcium ion binding"/>
    <property type="evidence" value="ECO:0007669"/>
    <property type="project" value="InterPro"/>
</dbReference>
<dbReference type="CDD" id="cd00054">
    <property type="entry name" value="EGF_CA"/>
    <property type="match status" value="6"/>
</dbReference>
<dbReference type="CDD" id="cd00096">
    <property type="entry name" value="Ig"/>
    <property type="match status" value="12"/>
</dbReference>
<dbReference type="CDD" id="cd00198">
    <property type="entry name" value="vWFA"/>
    <property type="match status" value="1"/>
</dbReference>
<dbReference type="FunFam" id="2.10.25.10:FF:000352">
    <property type="entry name" value="Hemicentin 1"/>
    <property type="match status" value="1"/>
</dbReference>
<dbReference type="FunFam" id="2.10.25.10:FF:000385">
    <property type="entry name" value="Hemicentin 1"/>
    <property type="match status" value="1"/>
</dbReference>
<dbReference type="FunFam" id="2.40.155.10:FF:000002">
    <property type="entry name" value="Hemicentin 1"/>
    <property type="match status" value="1"/>
</dbReference>
<dbReference type="FunFam" id="2.60.40.10:FF:000130">
    <property type="entry name" value="Hemicentin 1"/>
    <property type="match status" value="5"/>
</dbReference>
<dbReference type="FunFam" id="2.60.40.10:FF:000186">
    <property type="entry name" value="Hemicentin 1"/>
    <property type="match status" value="5"/>
</dbReference>
<dbReference type="FunFam" id="2.60.40.10:FF:000279">
    <property type="entry name" value="Hemicentin 1"/>
    <property type="match status" value="1"/>
</dbReference>
<dbReference type="FunFam" id="2.60.40.10:FF:000285">
    <property type="entry name" value="Hemicentin 1"/>
    <property type="match status" value="2"/>
</dbReference>
<dbReference type="FunFam" id="2.60.40.10:FF:000503">
    <property type="entry name" value="Hemicentin 1"/>
    <property type="match status" value="2"/>
</dbReference>
<dbReference type="FunFam" id="2.60.40.10:FF:000594">
    <property type="entry name" value="Hemicentin 1"/>
    <property type="match status" value="1"/>
</dbReference>
<dbReference type="FunFam" id="2.60.40.10:FF:000675">
    <property type="entry name" value="Hemicentin 1"/>
    <property type="match status" value="1"/>
</dbReference>
<dbReference type="FunFam" id="2.60.40.10:FF:000706">
    <property type="entry name" value="Hemicentin 1"/>
    <property type="match status" value="1"/>
</dbReference>
<dbReference type="FunFam" id="2.60.40.10:FF:000890">
    <property type="entry name" value="Hemicentin 1"/>
    <property type="match status" value="1"/>
</dbReference>
<dbReference type="FunFam" id="2.60.40.10:FF:001133">
    <property type="entry name" value="Hemicentin 1"/>
    <property type="match status" value="1"/>
</dbReference>
<dbReference type="FunFam" id="3.40.50.410:FF:000032">
    <property type="entry name" value="Hemicentin 1"/>
    <property type="match status" value="1"/>
</dbReference>
<dbReference type="FunFam" id="2.10.25.10:FF:000715">
    <property type="entry name" value="Hemicentin 2"/>
    <property type="match status" value="1"/>
</dbReference>
<dbReference type="FunFam" id="2.60.40.10:FF:001348">
    <property type="entry name" value="Hemicentin 2"/>
    <property type="match status" value="2"/>
</dbReference>
<dbReference type="FunFam" id="2.60.40.10:FF:001415">
    <property type="entry name" value="Hemicentin 2"/>
    <property type="match status" value="1"/>
</dbReference>
<dbReference type="FunFam" id="2.60.40.10:FF:001759">
    <property type="entry name" value="Hemicentin 2"/>
    <property type="match status" value="1"/>
</dbReference>
<dbReference type="FunFam" id="2.60.40.10:FF:001855">
    <property type="entry name" value="Hemicentin 2"/>
    <property type="match status" value="1"/>
</dbReference>
<dbReference type="FunFam" id="2.60.40.10:FF:001856">
    <property type="entry name" value="Hemicentin 2"/>
    <property type="match status" value="1"/>
</dbReference>
<dbReference type="FunFam" id="2.60.40.10:FF:001857">
    <property type="entry name" value="Hemicentin 2"/>
    <property type="match status" value="1"/>
</dbReference>
<dbReference type="FunFam" id="2.60.40.10:FF:001859">
    <property type="entry name" value="Hemicentin 2"/>
    <property type="match status" value="1"/>
</dbReference>
<dbReference type="FunFam" id="2.60.40.10:FF:001944">
    <property type="entry name" value="Hemicentin 2"/>
    <property type="match status" value="1"/>
</dbReference>
<dbReference type="FunFam" id="2.60.40.10:FF:001949">
    <property type="entry name" value="Hemicentin 2"/>
    <property type="match status" value="1"/>
</dbReference>
<dbReference type="FunFam" id="2.60.40.10:FF:001984">
    <property type="entry name" value="Hemicentin 2"/>
    <property type="match status" value="1"/>
</dbReference>
<dbReference type="FunFam" id="2.60.40.10:FF:001985">
    <property type="entry name" value="Hemicentin 2"/>
    <property type="match status" value="1"/>
</dbReference>
<dbReference type="FunFam" id="2.60.40.10:FF:002179">
    <property type="entry name" value="Hemicentin 2"/>
    <property type="match status" value="1"/>
</dbReference>
<dbReference type="FunFam" id="2.60.40.10:FF:001585">
    <property type="entry name" value="Hemicentin-2"/>
    <property type="match status" value="1"/>
</dbReference>
<dbReference type="FunFam" id="2.60.40.10:FF:002957">
    <property type="entry name" value="Hemicentin-2"/>
    <property type="match status" value="1"/>
</dbReference>
<dbReference type="FunFam" id="2.60.40.10:FF:001751">
    <property type="entry name" value="HMCN2 isoform 3"/>
    <property type="match status" value="1"/>
</dbReference>
<dbReference type="FunFam" id="2.60.40.10:FF:002450">
    <property type="entry name" value="HMCN2 isoform 3"/>
    <property type="match status" value="1"/>
</dbReference>
<dbReference type="FunFam" id="2.10.25.10:FF:000010">
    <property type="entry name" value="Pro-epidermal growth factor"/>
    <property type="match status" value="1"/>
</dbReference>
<dbReference type="FunFam" id="2.10.25.10:FF:000008">
    <property type="entry name" value="Signal peptide, CUB domain, EGF-like 2"/>
    <property type="match status" value="1"/>
</dbReference>
<dbReference type="Gene3D" id="2.40.155.10">
    <property type="entry name" value="Green fluorescent protein"/>
    <property type="match status" value="1"/>
</dbReference>
<dbReference type="Gene3D" id="2.60.40.10">
    <property type="entry name" value="Immunoglobulins"/>
    <property type="match status" value="43"/>
</dbReference>
<dbReference type="Gene3D" id="2.10.25.10">
    <property type="entry name" value="Laminin"/>
    <property type="match status" value="6"/>
</dbReference>
<dbReference type="Gene3D" id="3.40.50.410">
    <property type="entry name" value="von Willebrand factor, type A domain"/>
    <property type="match status" value="1"/>
</dbReference>
<dbReference type="InterPro" id="IPR026823">
    <property type="entry name" value="cEGF"/>
</dbReference>
<dbReference type="InterPro" id="IPR050958">
    <property type="entry name" value="Cell_Adh-Cytoskel_Orgn"/>
</dbReference>
<dbReference type="InterPro" id="IPR001881">
    <property type="entry name" value="EGF-like_Ca-bd_dom"/>
</dbReference>
<dbReference type="InterPro" id="IPR000742">
    <property type="entry name" value="EGF-like_dom"/>
</dbReference>
<dbReference type="InterPro" id="IPR000152">
    <property type="entry name" value="EGF-type_Asp/Asn_hydroxyl_site"/>
</dbReference>
<dbReference type="InterPro" id="IPR018097">
    <property type="entry name" value="EGF_Ca-bd_CS"/>
</dbReference>
<dbReference type="InterPro" id="IPR006605">
    <property type="entry name" value="G2_nidogen/fibulin_G2F"/>
</dbReference>
<dbReference type="InterPro" id="IPR056475">
    <property type="entry name" value="GBD_Hemicentin/VWA7"/>
</dbReference>
<dbReference type="InterPro" id="IPR009017">
    <property type="entry name" value="GFP"/>
</dbReference>
<dbReference type="InterPro" id="IPR009030">
    <property type="entry name" value="Growth_fac_rcpt_cys_sf"/>
</dbReference>
<dbReference type="InterPro" id="IPR056861">
    <property type="entry name" value="HMCN1-like_VWA"/>
</dbReference>
<dbReference type="InterPro" id="IPR007110">
    <property type="entry name" value="Ig-like_dom"/>
</dbReference>
<dbReference type="InterPro" id="IPR036179">
    <property type="entry name" value="Ig-like_dom_sf"/>
</dbReference>
<dbReference type="InterPro" id="IPR013783">
    <property type="entry name" value="Ig-like_fold"/>
</dbReference>
<dbReference type="InterPro" id="IPR013098">
    <property type="entry name" value="Ig_I-set"/>
</dbReference>
<dbReference type="InterPro" id="IPR003599">
    <property type="entry name" value="Ig_sub"/>
</dbReference>
<dbReference type="InterPro" id="IPR003598">
    <property type="entry name" value="Ig_sub2"/>
</dbReference>
<dbReference type="InterPro" id="IPR013106">
    <property type="entry name" value="Ig_V-set"/>
</dbReference>
<dbReference type="InterPro" id="IPR049883">
    <property type="entry name" value="NOTCH1_EGF-like"/>
</dbReference>
<dbReference type="InterPro" id="IPR036465">
    <property type="entry name" value="vWFA_dom_sf"/>
</dbReference>
<dbReference type="PANTHER" id="PTHR45080">
    <property type="entry name" value="CONTACTIN 5"/>
    <property type="match status" value="1"/>
</dbReference>
<dbReference type="PANTHER" id="PTHR45080:SF34">
    <property type="entry name" value="MYOSIN LIGHT CHAIN KINASE, SMOOTH MUSCLE-LIKE"/>
    <property type="match status" value="1"/>
</dbReference>
<dbReference type="Pfam" id="PF12662">
    <property type="entry name" value="cEGF"/>
    <property type="match status" value="1"/>
</dbReference>
<dbReference type="Pfam" id="PF07645">
    <property type="entry name" value="EGF_CA"/>
    <property type="match status" value="4"/>
</dbReference>
<dbReference type="Pfam" id="PF07474">
    <property type="entry name" value="G2F"/>
    <property type="match status" value="1"/>
</dbReference>
<dbReference type="Pfam" id="PF23560">
    <property type="entry name" value="GBD_Hemicentin"/>
    <property type="match status" value="1"/>
</dbReference>
<dbReference type="Pfam" id="PF07679">
    <property type="entry name" value="I-set"/>
    <property type="match status" value="33"/>
</dbReference>
<dbReference type="Pfam" id="PF13927">
    <property type="entry name" value="Ig_3"/>
    <property type="match status" value="8"/>
</dbReference>
<dbReference type="Pfam" id="PF25106">
    <property type="entry name" value="VWA_4"/>
    <property type="match status" value="1"/>
</dbReference>
<dbReference type="SMART" id="SM00181">
    <property type="entry name" value="EGF"/>
    <property type="match status" value="6"/>
</dbReference>
<dbReference type="SMART" id="SM00179">
    <property type="entry name" value="EGF_CA"/>
    <property type="match status" value="6"/>
</dbReference>
<dbReference type="SMART" id="SM00682">
    <property type="entry name" value="G2F"/>
    <property type="match status" value="1"/>
</dbReference>
<dbReference type="SMART" id="SM00409">
    <property type="entry name" value="IG"/>
    <property type="match status" value="43"/>
</dbReference>
<dbReference type="SMART" id="SM00408">
    <property type="entry name" value="IGc2"/>
    <property type="match status" value="43"/>
</dbReference>
<dbReference type="SMART" id="SM00406">
    <property type="entry name" value="IGv"/>
    <property type="match status" value="12"/>
</dbReference>
<dbReference type="SUPFAM" id="SSF57196">
    <property type="entry name" value="EGF/Laminin"/>
    <property type="match status" value="1"/>
</dbReference>
<dbReference type="SUPFAM" id="SSF54511">
    <property type="entry name" value="GFP-like"/>
    <property type="match status" value="1"/>
</dbReference>
<dbReference type="SUPFAM" id="SSF57184">
    <property type="entry name" value="Growth factor receptor domain"/>
    <property type="match status" value="2"/>
</dbReference>
<dbReference type="SUPFAM" id="SSF48726">
    <property type="entry name" value="Immunoglobulin"/>
    <property type="match status" value="42"/>
</dbReference>
<dbReference type="SUPFAM" id="SSF53300">
    <property type="entry name" value="vWA-like"/>
    <property type="match status" value="1"/>
</dbReference>
<dbReference type="PROSITE" id="PS00010">
    <property type="entry name" value="ASX_HYDROXYL"/>
    <property type="match status" value="3"/>
</dbReference>
<dbReference type="PROSITE" id="PS01186">
    <property type="entry name" value="EGF_2"/>
    <property type="match status" value="3"/>
</dbReference>
<dbReference type="PROSITE" id="PS50026">
    <property type="entry name" value="EGF_3"/>
    <property type="match status" value="5"/>
</dbReference>
<dbReference type="PROSITE" id="PS01187">
    <property type="entry name" value="EGF_CA"/>
    <property type="match status" value="5"/>
</dbReference>
<dbReference type="PROSITE" id="PS50835">
    <property type="entry name" value="IG_LIKE"/>
    <property type="match status" value="43"/>
</dbReference>
<dbReference type="PROSITE" id="PS50993">
    <property type="entry name" value="NIDOGEN_G2"/>
    <property type="match status" value="1"/>
</dbReference>
<gene>
    <name type="primary">Hmcn2</name>
</gene>
<reference key="1">
    <citation type="journal article" date="2005" name="Science">
        <title>The transcriptional landscape of the mammalian genome.</title>
        <authorList>
            <person name="Carninci P."/>
            <person name="Kasukawa T."/>
            <person name="Katayama S."/>
            <person name="Gough J."/>
            <person name="Frith M.C."/>
            <person name="Maeda N."/>
            <person name="Oyama R."/>
            <person name="Ravasi T."/>
            <person name="Lenhard B."/>
            <person name="Wells C."/>
            <person name="Kodzius R."/>
            <person name="Shimokawa K."/>
            <person name="Bajic V.B."/>
            <person name="Brenner S.E."/>
            <person name="Batalov S."/>
            <person name="Forrest A.R."/>
            <person name="Zavolan M."/>
            <person name="Davis M.J."/>
            <person name="Wilming L.G."/>
            <person name="Aidinis V."/>
            <person name="Allen J.E."/>
            <person name="Ambesi-Impiombato A."/>
            <person name="Apweiler R."/>
            <person name="Aturaliya R.N."/>
            <person name="Bailey T.L."/>
            <person name="Bansal M."/>
            <person name="Baxter L."/>
            <person name="Beisel K.W."/>
            <person name="Bersano T."/>
            <person name="Bono H."/>
            <person name="Chalk A.M."/>
            <person name="Chiu K.P."/>
            <person name="Choudhary V."/>
            <person name="Christoffels A."/>
            <person name="Clutterbuck D.R."/>
            <person name="Crowe M.L."/>
            <person name="Dalla E."/>
            <person name="Dalrymple B.P."/>
            <person name="de Bono B."/>
            <person name="Della Gatta G."/>
            <person name="di Bernardo D."/>
            <person name="Down T."/>
            <person name="Engstrom P."/>
            <person name="Fagiolini M."/>
            <person name="Faulkner G."/>
            <person name="Fletcher C.F."/>
            <person name="Fukushima T."/>
            <person name="Furuno M."/>
            <person name="Futaki S."/>
            <person name="Gariboldi M."/>
            <person name="Georgii-Hemming P."/>
            <person name="Gingeras T.R."/>
            <person name="Gojobori T."/>
            <person name="Green R.E."/>
            <person name="Gustincich S."/>
            <person name="Harbers M."/>
            <person name="Hayashi Y."/>
            <person name="Hensch T.K."/>
            <person name="Hirokawa N."/>
            <person name="Hill D."/>
            <person name="Huminiecki L."/>
            <person name="Iacono M."/>
            <person name="Ikeo K."/>
            <person name="Iwama A."/>
            <person name="Ishikawa T."/>
            <person name="Jakt M."/>
            <person name="Kanapin A."/>
            <person name="Katoh M."/>
            <person name="Kawasawa Y."/>
            <person name="Kelso J."/>
            <person name="Kitamura H."/>
            <person name="Kitano H."/>
            <person name="Kollias G."/>
            <person name="Krishnan S.P."/>
            <person name="Kruger A."/>
            <person name="Kummerfeld S.K."/>
            <person name="Kurochkin I.V."/>
            <person name="Lareau L.F."/>
            <person name="Lazarevic D."/>
            <person name="Lipovich L."/>
            <person name="Liu J."/>
            <person name="Liuni S."/>
            <person name="McWilliam S."/>
            <person name="Madan Babu M."/>
            <person name="Madera M."/>
            <person name="Marchionni L."/>
            <person name="Matsuda H."/>
            <person name="Matsuzawa S."/>
            <person name="Miki H."/>
            <person name="Mignone F."/>
            <person name="Miyake S."/>
            <person name="Morris K."/>
            <person name="Mottagui-Tabar S."/>
            <person name="Mulder N."/>
            <person name="Nakano N."/>
            <person name="Nakauchi H."/>
            <person name="Ng P."/>
            <person name="Nilsson R."/>
            <person name="Nishiguchi S."/>
            <person name="Nishikawa S."/>
            <person name="Nori F."/>
            <person name="Ohara O."/>
            <person name="Okazaki Y."/>
            <person name="Orlando V."/>
            <person name="Pang K.C."/>
            <person name="Pavan W.J."/>
            <person name="Pavesi G."/>
            <person name="Pesole G."/>
            <person name="Petrovsky N."/>
            <person name="Piazza S."/>
            <person name="Reed J."/>
            <person name="Reid J.F."/>
            <person name="Ring B.Z."/>
            <person name="Ringwald M."/>
            <person name="Rost B."/>
            <person name="Ruan Y."/>
            <person name="Salzberg S.L."/>
            <person name="Sandelin A."/>
            <person name="Schneider C."/>
            <person name="Schoenbach C."/>
            <person name="Sekiguchi K."/>
            <person name="Semple C.A."/>
            <person name="Seno S."/>
            <person name="Sessa L."/>
            <person name="Sheng Y."/>
            <person name="Shibata Y."/>
            <person name="Shimada H."/>
            <person name="Shimada K."/>
            <person name="Silva D."/>
            <person name="Sinclair B."/>
            <person name="Sperling S."/>
            <person name="Stupka E."/>
            <person name="Sugiura K."/>
            <person name="Sultana R."/>
            <person name="Takenaka Y."/>
            <person name="Taki K."/>
            <person name="Tammoja K."/>
            <person name="Tan S.L."/>
            <person name="Tang S."/>
            <person name="Taylor M.S."/>
            <person name="Tegner J."/>
            <person name="Teichmann S.A."/>
            <person name="Ueda H.R."/>
            <person name="van Nimwegen E."/>
            <person name="Verardo R."/>
            <person name="Wei C.L."/>
            <person name="Yagi K."/>
            <person name="Yamanishi H."/>
            <person name="Zabarovsky E."/>
            <person name="Zhu S."/>
            <person name="Zimmer A."/>
            <person name="Hide W."/>
            <person name="Bult C."/>
            <person name="Grimmond S.M."/>
            <person name="Teasdale R.D."/>
            <person name="Liu E.T."/>
            <person name="Brusic V."/>
            <person name="Quackenbush J."/>
            <person name="Wahlestedt C."/>
            <person name="Mattick J.S."/>
            <person name="Hume D.A."/>
            <person name="Kai C."/>
            <person name="Sasaki D."/>
            <person name="Tomaru Y."/>
            <person name="Fukuda S."/>
            <person name="Kanamori-Katayama M."/>
            <person name="Suzuki M."/>
            <person name="Aoki J."/>
            <person name="Arakawa T."/>
            <person name="Iida J."/>
            <person name="Imamura K."/>
            <person name="Itoh M."/>
            <person name="Kato T."/>
            <person name="Kawaji H."/>
            <person name="Kawagashira N."/>
            <person name="Kawashima T."/>
            <person name="Kojima M."/>
            <person name="Kondo S."/>
            <person name="Konno H."/>
            <person name="Nakano K."/>
            <person name="Ninomiya N."/>
            <person name="Nishio T."/>
            <person name="Okada M."/>
            <person name="Plessy C."/>
            <person name="Shibata K."/>
            <person name="Shiraki T."/>
            <person name="Suzuki S."/>
            <person name="Tagami M."/>
            <person name="Waki K."/>
            <person name="Watahiki A."/>
            <person name="Okamura-Oho Y."/>
            <person name="Suzuki H."/>
            <person name="Kawai J."/>
            <person name="Hayashizaki Y."/>
        </authorList>
    </citation>
    <scope>NUCLEOTIDE SEQUENCE [LARGE SCALE MRNA] (ISOFORM 2)</scope>
    <source>
        <strain>C57BL/6J</strain>
    </source>
</reference>
<reference key="2">
    <citation type="journal article" date="2009" name="PLoS Biol.">
        <title>Lineage-specific biology revealed by a finished genome assembly of the mouse.</title>
        <authorList>
            <person name="Church D.M."/>
            <person name="Goodstadt L."/>
            <person name="Hillier L.W."/>
            <person name="Zody M.C."/>
            <person name="Goldstein S."/>
            <person name="She X."/>
            <person name="Bult C.J."/>
            <person name="Agarwala R."/>
            <person name="Cherry J.L."/>
            <person name="DiCuccio M."/>
            <person name="Hlavina W."/>
            <person name="Kapustin Y."/>
            <person name="Meric P."/>
            <person name="Maglott D."/>
            <person name="Birtle Z."/>
            <person name="Marques A.C."/>
            <person name="Graves T."/>
            <person name="Zhou S."/>
            <person name="Teague B."/>
            <person name="Potamousis K."/>
            <person name="Churas C."/>
            <person name="Place M."/>
            <person name="Herschleb J."/>
            <person name="Runnheim R."/>
            <person name="Forrest D."/>
            <person name="Amos-Landgraf J."/>
            <person name="Schwartz D.C."/>
            <person name="Cheng Z."/>
            <person name="Lindblad-Toh K."/>
            <person name="Eichler E.E."/>
            <person name="Ponting C.P."/>
        </authorList>
    </citation>
    <scope>NUCLEOTIDE SEQUENCE [LARGE SCALE GENOMIC DNA]</scope>
    <source>
        <strain>C57BL/6J</strain>
    </source>
</reference>
<reference key="3">
    <citation type="journal article" date="2007" name="J. Histochem. Cytochem.">
        <title>Hemicentins assemble on diverse epithelia in the mouse.</title>
        <authorList>
            <person name="Xu X."/>
            <person name="Dong C."/>
            <person name="Vogel B.E."/>
        </authorList>
    </citation>
    <scope>SUBCELLULAR LOCATION</scope>
    <scope>TISSUE SPECIFICITY</scope>
</reference>
<reference key="4">
    <citation type="journal article" date="2011" name="Curr. Biol.">
        <title>A secreted protein promotes cleavage furrow maturation during cytokinesis.</title>
        <authorList>
            <person name="Xu X."/>
            <person name="Vogel B.E."/>
        </authorList>
    </citation>
    <scope>SUBCELLULAR LOCATION</scope>
</reference>
<reference key="5">
    <citation type="journal article" date="2014" name="Mol. Cell. Proteomics">
        <title>Immunoaffinity enrichment and mass spectrometry analysis of protein methylation.</title>
        <authorList>
            <person name="Guo A."/>
            <person name="Gu H."/>
            <person name="Zhou J."/>
            <person name="Mulhern D."/>
            <person name="Wang Y."/>
            <person name="Lee K.A."/>
            <person name="Yang V."/>
            <person name="Aguiar M."/>
            <person name="Kornhauser J."/>
            <person name="Jia X."/>
            <person name="Ren J."/>
            <person name="Beausoleil S.A."/>
            <person name="Silva J.C."/>
            <person name="Vemulapalli V."/>
            <person name="Bedford M.T."/>
            <person name="Comb M.J."/>
        </authorList>
    </citation>
    <scope>METHYLATION [LARGE SCALE ANALYSIS] AT ARG-909; ARG-914 AND ARG-915</scope>
    <scope>IDENTIFICATION BY MASS SPECTROMETRY [LARGE SCALE ANALYSIS]</scope>
    <source>
        <tissue>Embryo</tissue>
    </source>
</reference>
<reference key="6">
    <citation type="journal article" date="2020" name="Dev. Dyn.">
        <title>Mammalian hemicentin 1 is assembled into tracks in the extracellular matrix of multiple tissues.</title>
        <authorList>
            <person name="Lin M.H."/>
            <person name="Pope B.D. III"/>
            <person name="Sasaki T."/>
            <person name="Keeley D.P."/>
            <person name="Sherwood D.R."/>
            <person name="Miner J.H."/>
        </authorList>
    </citation>
    <scope>DISRUPTION PHENOTYPE</scope>
</reference>
<reference key="7">
    <citation type="journal article" date="2021" name="Sci. Rep.">
        <title>Hemicentin-1 is an essential extracellular matrix component of the dermal-epidermal and myotendinous junctions.</title>
        <authorList>
            <person name="Welcker D."/>
            <person name="Stein C."/>
            <person name="Feitosa N.M."/>
            <person name="Armistead J."/>
            <person name="Zhang J.L."/>
            <person name="Luetke S."/>
            <person name="Kleinridders A."/>
            <person name="Bruening J.C."/>
            <person name="Eming S.A."/>
            <person name="Sengle G."/>
            <person name="Niehoff A."/>
            <person name="Bloch W."/>
            <person name="Hammerschmidt M."/>
        </authorList>
    </citation>
    <scope>TISSUE SPECIFICITY</scope>
    <scope>INDUCTION</scope>
</reference>
<keyword id="KW-0025">Alternative splicing</keyword>
<keyword id="KW-0106">Calcium</keyword>
<keyword id="KW-1015">Disulfide bond</keyword>
<keyword id="KW-0245">EGF-like domain</keyword>
<keyword id="KW-0272">Extracellular matrix</keyword>
<keyword id="KW-0325">Glycoprotein</keyword>
<keyword id="KW-0393">Immunoglobulin domain</keyword>
<keyword id="KW-0488">Methylation</keyword>
<keyword id="KW-0597">Phosphoprotein</keyword>
<keyword id="KW-1185">Reference proteome</keyword>
<keyword id="KW-0677">Repeat</keyword>
<keyword id="KW-0964">Secreted</keyword>
<keyword id="KW-0716">Sensory transduction</keyword>
<keyword id="KW-0732">Signal</keyword>
<comment type="subcellular location">
    <subcellularLocation>
        <location evidence="6">Secreted</location>
        <location evidence="6">Extracellular space</location>
        <location evidence="6">Extracellular matrix</location>
    </subcellularLocation>
    <subcellularLocation>
        <location evidence="7">Cleavage furrow</location>
    </subcellularLocation>
    <text evidence="6 7">The antibody used in PubMed:17015624 and PubMed:21215633 to determine subcellular location does not distinguish between HMCN1 and HMCN2.</text>
</comment>
<comment type="alternative products">
    <event type="alternative splicing"/>
    <isoform>
        <id>A2AJ76-1</id>
        <name>1</name>
        <sequence type="displayed"/>
    </isoform>
    <isoform>
        <id>A2AJ76-2</id>
        <name>2</name>
        <sequence type="described" ref="VSP_039372"/>
    </isoform>
</comment>
<comment type="tissue specificity">
    <text evidence="6 9">In neonatal skin, localized in the pericellular space of basal epidermal keratinocytes (at protein level) (PubMed:34504132). In adult skin, restricted to basal keratinocytes of hair follicles and the interfollicular epidermis (PubMed:34504132). Absent from the myotendinous junction but present in skeletal muscle (at protein level) (PubMed:34504132). Expressed in the pericellular extracellular matrix of epithelial cells in a number of tissues including embryonic trophectoderm and adult skin and tongue (PubMed:17015624). Also present in the extracellular matrix of some, but not all, blood vessels (PubMed:17015624). Expressed primarily in epithelial cells in the embryonic epidermis, lung, intestine, skeletal hindlimb muscle, tongue and the muscular layers of the esophagus (PubMed:34504132).</text>
</comment>
<comment type="induction">
    <text evidence="9">Following wounding, up-regulated in the basal keratinocytes within the epidermal tongues of closing wounds.</text>
</comment>
<comment type="PTM">
    <text>Reported to be phosphorylated; however as this position is extracellular, the in vivo relevance is unsure.</text>
</comment>
<comment type="disruption phenotype">
    <text evidence="8">Mutants are viable and fertile with no gross phenotypes (PubMed:32035013). Double knockout of Hmcn1 and Hmcn2 results in no overt phenotypes with mice being viable and fertile (PubMed:32035013).</text>
</comment>
<comment type="sequence caution" evidence="11">
    <conflict type="frameshift">
        <sequence resource="EMBL-CDS" id="BAC38997"/>
    </conflict>
</comment>